<comment type="function">
    <text evidence="1">Required during prometaphase for centrosome maturation. Following poly-ADP-ribosylation (PARsylation) by TNKS, translocates from the Golgi apparatus to mitotic centrosomes and plays a key role in the formation of robust microtubules for prompt movement of chromosomes: anchors AKAP9/CG-NAP, a scaffold protein of the gamma-tubulin ring complex and promotes centrosome maturation (By similarity).</text>
</comment>
<comment type="subcellular location">
    <subcellularLocation>
        <location evidence="2">Golgi apparatus membrane</location>
        <topology evidence="3">Single-pass type I membrane protein</topology>
    </subcellularLocation>
    <subcellularLocation>
        <location evidence="2">Cytoplasm</location>
        <location evidence="2">Cytoskeleton</location>
        <location evidence="2">Spindle</location>
    </subcellularLocation>
    <subcellularLocation>
        <location evidence="2">Cytoplasm</location>
        <location evidence="2">Cytoskeleton</location>
        <location evidence="2">Microtubule organizing center</location>
        <location evidence="2">Centrosome</location>
    </subcellularLocation>
    <subcellularLocation>
        <location evidence="2">Midbody</location>
    </subcellularLocation>
    <text evidence="2">In interphase, localizes to the Golgi apparatus. Localizes to centrosomes and spindles during prophase, prometaphase, and metaphase of mitosis, and to midbodies at telophase. Translocation to mitotic centrosomes is the result of poly-ADP-ribosylation (PARsylation).</text>
</comment>
<comment type="PTM">
    <text evidence="1">Poly-ADP-ribosylated (PARsylated) by tankyrase TNKS during late G2 and prophase, leading to translocation to mitotic centrosomes.</text>
</comment>
<comment type="PTM">
    <text evidence="1">N-glycosylated.</text>
</comment>
<name>HECA2_MOUSE</name>
<organism>
    <name type="scientific">Mus musculus</name>
    <name type="common">Mouse</name>
    <dbReference type="NCBI Taxonomy" id="10090"/>
    <lineage>
        <taxon>Eukaryota</taxon>
        <taxon>Metazoa</taxon>
        <taxon>Chordata</taxon>
        <taxon>Craniata</taxon>
        <taxon>Vertebrata</taxon>
        <taxon>Euteleostomi</taxon>
        <taxon>Mammalia</taxon>
        <taxon>Eutheria</taxon>
        <taxon>Euarchontoglires</taxon>
        <taxon>Glires</taxon>
        <taxon>Rodentia</taxon>
        <taxon>Myomorpha</taxon>
        <taxon>Muroidea</taxon>
        <taxon>Muridae</taxon>
        <taxon>Murinae</taxon>
        <taxon>Mus</taxon>
        <taxon>Mus</taxon>
    </lineage>
</organism>
<keyword id="KW-0013">ADP-ribosylation</keyword>
<keyword id="KW-0131">Cell cycle</keyword>
<keyword id="KW-0132">Cell division</keyword>
<keyword id="KW-0963">Cytoplasm</keyword>
<keyword id="KW-0206">Cytoskeleton</keyword>
<keyword id="KW-1015">Disulfide bond</keyword>
<keyword id="KW-0325">Glycoprotein</keyword>
<keyword id="KW-0333">Golgi apparatus</keyword>
<keyword id="KW-0393">Immunoglobulin domain</keyword>
<keyword id="KW-0472">Membrane</keyword>
<keyword id="KW-0498">Mitosis</keyword>
<keyword id="KW-1185">Reference proteome</keyword>
<keyword id="KW-0677">Repeat</keyword>
<keyword id="KW-0732">Signal</keyword>
<keyword id="KW-0812">Transmembrane</keyword>
<keyword id="KW-1133">Transmembrane helix</keyword>
<accession>Q4VAH7</accession>
<feature type="signal peptide" evidence="3">
    <location>
        <begin position="1"/>
        <end position="32"/>
    </location>
</feature>
<feature type="chain" id="PRO_0000332221" description="HEPACAM family member 2">
    <location>
        <begin position="33"/>
        <end position="463"/>
    </location>
</feature>
<feature type="transmembrane region" description="Helical" evidence="3">
    <location>
        <begin position="353"/>
        <end position="373"/>
    </location>
</feature>
<feature type="topological domain" description="Cytoplasmic" evidence="3">
    <location>
        <begin position="374"/>
        <end position="463"/>
    </location>
</feature>
<feature type="domain" description="Ig-like C2-type 1">
    <location>
        <begin position="150"/>
        <end position="234"/>
    </location>
</feature>
<feature type="domain" description="Ig-like C2-type 2">
    <location>
        <begin position="236"/>
        <end position="332"/>
    </location>
</feature>
<feature type="glycosylation site" description="N-linked (GlcNAc...) asparagine" evidence="3">
    <location>
        <position position="86"/>
    </location>
</feature>
<feature type="glycosylation site" description="N-linked (GlcNAc...) asparagine" evidence="3">
    <location>
        <position position="130"/>
    </location>
</feature>
<feature type="glycosylation site" description="N-linked (GlcNAc...) asparagine" evidence="3">
    <location>
        <position position="166"/>
    </location>
</feature>
<feature type="glycosylation site" description="N-linked (GlcNAc...) asparagine" evidence="3">
    <location>
        <position position="321"/>
    </location>
</feature>
<feature type="disulfide bond" evidence="4">
    <location>
        <begin position="171"/>
        <end position="220"/>
    </location>
</feature>
<feature type="disulfide bond" evidence="4">
    <location>
        <begin position="271"/>
        <end position="316"/>
    </location>
</feature>
<protein>
    <recommendedName>
        <fullName>HEPACAM family member 2</fullName>
    </recommendedName>
    <alternativeName>
        <fullName>Mitotic kinetics regulator</fullName>
    </alternativeName>
</protein>
<gene>
    <name type="primary">Hepacam2</name>
    <name type="synonym">Miki</name>
</gene>
<proteinExistence type="evidence at transcript level"/>
<reference key="1">
    <citation type="journal article" date="2004" name="Genome Res.">
        <title>The status, quality, and expansion of the NIH full-length cDNA project: the Mammalian Gene Collection (MGC).</title>
        <authorList>
            <consortium name="The MGC Project Team"/>
        </authorList>
    </citation>
    <scope>NUCLEOTIDE SEQUENCE [LARGE SCALE MRNA]</scope>
    <source>
        <strain>FVB/N</strain>
        <tissue>Mammary tumor</tissue>
    </source>
</reference>
<sequence length="463" mass="51421">MGQDAFMELLRSMVGLSLCKIHLLLIAGSCLGLKVTVPSYTVHGIRGQALYLPVHYGFHTPASDIQIIWLFERSHTMPKYLLGSVNKSVVPDLEYQHKFTMMPPNASLLINPLQFTDEGNYIVKVNIQGNGTLSASQKIQVTVDDPVMKPMVQFHPASGAVEYVGNITLTCQVEGGTRLVYQWRKSGKPISINSSHSFSPQNNTLWIVPVTKEDIGNYTCLVSNPVSEMESDIIMPTIYYGPYGLQVNSDKGLKVGEVFTVDLGEAVLFDCSADSYPPNTYSWIQRSDNTTHVIKHGPHLEVASEKVAQKTADYVCCAYNNITGRRDETRFTVIITSVGLEKLAQRGKSLSPLASITGISLFLIISMCLLFLWKKYQPYKAIRQKLEGRPESEYRKAQTFSGHEDALSDFGIYEFVTFPDASGVSRMSSRSSPASDGVTGQDIHGTIYEVIQHIPEQQQENTE</sequence>
<dbReference type="EMBL" id="BC096374">
    <property type="protein sequence ID" value="AAH96374.1"/>
    <property type="molecule type" value="mRNA"/>
</dbReference>
<dbReference type="CCDS" id="CCDS39414.1"/>
<dbReference type="RefSeq" id="NP_849230.1">
    <property type="nucleotide sequence ID" value="NM_178899.6"/>
</dbReference>
<dbReference type="RefSeq" id="XP_030110902.1">
    <property type="nucleotide sequence ID" value="XM_030255042.1"/>
</dbReference>
<dbReference type="FunCoup" id="Q4VAH7">
    <property type="interactions" value="320"/>
</dbReference>
<dbReference type="STRING" id="10090.ENSMUSP00000058882"/>
<dbReference type="GlyCosmos" id="Q4VAH7">
    <property type="glycosylation" value="4 sites, No reported glycans"/>
</dbReference>
<dbReference type="GlyGen" id="Q4VAH7">
    <property type="glycosylation" value="4 sites"/>
</dbReference>
<dbReference type="iPTMnet" id="Q4VAH7"/>
<dbReference type="PhosphoSitePlus" id="Q4VAH7"/>
<dbReference type="PaxDb" id="10090-ENSMUSP00000058882"/>
<dbReference type="ProteomicsDB" id="269782"/>
<dbReference type="Antibodypedia" id="2717">
    <property type="antibodies" value="136 antibodies from 21 providers"/>
</dbReference>
<dbReference type="DNASU" id="101202"/>
<dbReference type="Ensembl" id="ENSMUST00000049985.15">
    <property type="protein sequence ID" value="ENSMUSP00000058882.8"/>
    <property type="gene ID" value="ENSMUSG00000044156.15"/>
</dbReference>
<dbReference type="GeneID" id="101202"/>
<dbReference type="KEGG" id="mmu:101202"/>
<dbReference type="UCSC" id="uc009auz.1">
    <property type="organism name" value="mouse"/>
</dbReference>
<dbReference type="AGR" id="MGI:2141520"/>
<dbReference type="CTD" id="253012"/>
<dbReference type="MGI" id="MGI:2141520">
    <property type="gene designation" value="Hepacam2"/>
</dbReference>
<dbReference type="VEuPathDB" id="HostDB:ENSMUSG00000044156"/>
<dbReference type="eggNOG" id="ENOG502QRJQ">
    <property type="taxonomic scope" value="Eukaryota"/>
</dbReference>
<dbReference type="GeneTree" id="ENSGT01130000278319"/>
<dbReference type="HOGENOM" id="CLU_049122_0_0_1"/>
<dbReference type="InParanoid" id="Q4VAH7"/>
<dbReference type="OMA" id="TIDYMCC"/>
<dbReference type="OrthoDB" id="9872799at2759"/>
<dbReference type="PhylomeDB" id="Q4VAH7"/>
<dbReference type="TreeFam" id="TF331199"/>
<dbReference type="BioGRID-ORCS" id="101202">
    <property type="hits" value="1 hit in 78 CRISPR screens"/>
</dbReference>
<dbReference type="ChiTaRS" id="Hepacam2">
    <property type="organism name" value="mouse"/>
</dbReference>
<dbReference type="PRO" id="PR:Q4VAH7"/>
<dbReference type="Proteomes" id="UP000000589">
    <property type="component" value="Chromosome 6"/>
</dbReference>
<dbReference type="RNAct" id="Q4VAH7">
    <property type="molecule type" value="protein"/>
</dbReference>
<dbReference type="Bgee" id="ENSMUSG00000044156">
    <property type="expression patterns" value="Expressed in islet of Langerhans and 67 other cell types or tissues"/>
</dbReference>
<dbReference type="ExpressionAtlas" id="Q4VAH7">
    <property type="expression patterns" value="baseline and differential"/>
</dbReference>
<dbReference type="GO" id="GO:0005813">
    <property type="term" value="C:centrosome"/>
    <property type="evidence" value="ECO:0000250"/>
    <property type="project" value="UniProtKB"/>
</dbReference>
<dbReference type="GO" id="GO:0005794">
    <property type="term" value="C:Golgi apparatus"/>
    <property type="evidence" value="ECO:0000250"/>
    <property type="project" value="UniProtKB"/>
</dbReference>
<dbReference type="GO" id="GO:0000139">
    <property type="term" value="C:Golgi membrane"/>
    <property type="evidence" value="ECO:0007669"/>
    <property type="project" value="UniProtKB-SubCell"/>
</dbReference>
<dbReference type="GO" id="GO:0030496">
    <property type="term" value="C:midbody"/>
    <property type="evidence" value="ECO:0000250"/>
    <property type="project" value="UniProtKB"/>
</dbReference>
<dbReference type="GO" id="GO:0072686">
    <property type="term" value="C:mitotic spindle"/>
    <property type="evidence" value="ECO:0007669"/>
    <property type="project" value="Ensembl"/>
</dbReference>
<dbReference type="GO" id="GO:0005654">
    <property type="term" value="C:nucleoplasm"/>
    <property type="evidence" value="ECO:0007669"/>
    <property type="project" value="Ensembl"/>
</dbReference>
<dbReference type="GO" id="GO:0005819">
    <property type="term" value="C:spindle"/>
    <property type="evidence" value="ECO:0000250"/>
    <property type="project" value="UniProtKB"/>
</dbReference>
<dbReference type="GO" id="GO:0051301">
    <property type="term" value="P:cell division"/>
    <property type="evidence" value="ECO:0007669"/>
    <property type="project" value="UniProtKB-KW"/>
</dbReference>
<dbReference type="GO" id="GO:0007098">
    <property type="term" value="P:centrosome cycle"/>
    <property type="evidence" value="ECO:0000250"/>
    <property type="project" value="UniProtKB"/>
</dbReference>
<dbReference type="CDD" id="cd00096">
    <property type="entry name" value="Ig"/>
    <property type="match status" value="1"/>
</dbReference>
<dbReference type="FunFam" id="2.60.40.10:FF:000483">
    <property type="entry name" value="HEPACAM family member 2 isoform X1"/>
    <property type="match status" value="1"/>
</dbReference>
<dbReference type="FunFam" id="2.60.40.10:FF:000624">
    <property type="entry name" value="HEPACAM family member 2 isoform X1"/>
    <property type="match status" value="1"/>
</dbReference>
<dbReference type="FunFam" id="2.60.40.10:FF:000506">
    <property type="entry name" value="HEPACAM family member 2 isoform X2"/>
    <property type="match status" value="1"/>
</dbReference>
<dbReference type="Gene3D" id="2.60.40.10">
    <property type="entry name" value="Immunoglobulins"/>
    <property type="match status" value="3"/>
</dbReference>
<dbReference type="InterPro" id="IPR052280">
    <property type="entry name" value="HEPACAM_domain"/>
</dbReference>
<dbReference type="InterPro" id="IPR007110">
    <property type="entry name" value="Ig-like_dom"/>
</dbReference>
<dbReference type="InterPro" id="IPR036179">
    <property type="entry name" value="Ig-like_dom_sf"/>
</dbReference>
<dbReference type="InterPro" id="IPR013783">
    <property type="entry name" value="Ig-like_fold"/>
</dbReference>
<dbReference type="InterPro" id="IPR003599">
    <property type="entry name" value="Ig_sub"/>
</dbReference>
<dbReference type="InterPro" id="IPR003598">
    <property type="entry name" value="Ig_sub2"/>
</dbReference>
<dbReference type="PANTHER" id="PTHR44888:SF1">
    <property type="entry name" value="HEPACAM FAMILY MEMBER 2"/>
    <property type="match status" value="1"/>
</dbReference>
<dbReference type="PANTHER" id="PTHR44888">
    <property type="entry name" value="HEPACAM FAMILY MEMBER 2-RELATED"/>
    <property type="match status" value="1"/>
</dbReference>
<dbReference type="Pfam" id="PF13927">
    <property type="entry name" value="Ig_3"/>
    <property type="match status" value="1"/>
</dbReference>
<dbReference type="SMART" id="SM00409">
    <property type="entry name" value="IG"/>
    <property type="match status" value="3"/>
</dbReference>
<dbReference type="SMART" id="SM00408">
    <property type="entry name" value="IGc2"/>
    <property type="match status" value="1"/>
</dbReference>
<dbReference type="SUPFAM" id="SSF48726">
    <property type="entry name" value="Immunoglobulin"/>
    <property type="match status" value="3"/>
</dbReference>
<dbReference type="PROSITE" id="PS50835">
    <property type="entry name" value="IG_LIKE"/>
    <property type="match status" value="2"/>
</dbReference>
<evidence type="ECO:0000250" key="1"/>
<evidence type="ECO:0000250" key="2">
    <source>
        <dbReference type="UniProtKB" id="A8MVW5"/>
    </source>
</evidence>
<evidence type="ECO:0000255" key="3"/>
<evidence type="ECO:0000255" key="4">
    <source>
        <dbReference type="PROSITE-ProRule" id="PRU00114"/>
    </source>
</evidence>